<comment type="function">
    <text evidence="5">Cytoplasmic dynein acts as a motor for the intracellular retrograde motility of vesicles and organelles along microtubules. Dynein has ATPase activity; the force-producing power stroke is thought to occur on release of ADP. Required to maintain uniform nuclear distribution in hyphae. May play an important role in the proper orientation of the mitotic spindle into the budding daughter cell yeast. Probably required for normal progression of the cell cycle.</text>
</comment>
<comment type="subunit">
    <text evidence="5">The dynein complex consists of at least two heavy chains and a number of intermediate and light chains. Interacts with DYN3.</text>
</comment>
<comment type="interaction">
    <interactant intactId="EBI-6230">
        <id>P36022</id>
    </interactant>
    <interactant intactId="EBI-6240">
        <id>Q02647</id>
        <label>DYN2</label>
    </interactant>
    <organismsDiffer>false</organismsDiffer>
    <experiments>3</experiments>
</comment>
<comment type="interaction">
    <interactant intactId="EBI-6230">
        <id>P36022</id>
    </interactant>
    <interactant intactId="EBI-27644">
        <id>Q04949</id>
        <label>DYN3</label>
    </interactant>
    <organismsDiffer>false</organismsDiffer>
    <experiments>2</experiments>
</comment>
<comment type="interaction">
    <interactant intactId="EBI-6230">
        <id>P36022</id>
    </interactant>
    <interactant intactId="EBI-30551">
        <id>P40960</id>
        <label>PAC11</label>
    </interactant>
    <organismsDiffer>false</organismsDiffer>
    <experiments>3</experiments>
</comment>
<comment type="interaction">
    <interactant intactId="EBI-6230">
        <id>P36022</id>
    </interactant>
    <interactant intactId="EBI-17402">
        <id>P32908</id>
        <label>SMC1</label>
    </interactant>
    <organismsDiffer>false</organismsDiffer>
    <experiments>3</experiments>
</comment>
<comment type="subcellular location">
    <subcellularLocation>
        <location evidence="3 5">Cytoplasm</location>
        <location evidence="3 5">Cytoskeleton</location>
    </subcellularLocation>
    <text>Concentrates at motile dots in the cytoplasm corresponding to the plus ends of cytoplasmic microtubules.</text>
</comment>
<comment type="domain">
    <text>Dynein heavy chains probably consist of an N-terminal stem (which binds cargo and interacts with other dynein components), and the head or motor domain. The motor contains six tandemly-linked AAA domains in the head, which form a ring. A stalk-like structure (formed by two of the coiled coil domains) protrudes between AAA 4 and AAA 5 and terminates in a microtubule-binding site. A seventh domain may also contribute to this ring; it is not clear whether the N-terminus or the C-terminus forms this extra domain. There are four well-conserved and two non-conserved ATPase sites, one per AAA domain. Probably only one of these (within AAA 1) actually hydrolyzes ATP, the others may serve a regulatory function.</text>
</comment>
<comment type="miscellaneous">
    <text evidence="4">Present with 195 molecules/cell in log phase SD medium.</text>
</comment>
<comment type="similarity">
    <text evidence="6">Belongs to the dynein heavy chain family.</text>
</comment>
<evidence type="ECO:0000250" key="1"/>
<evidence type="ECO:0000255" key="2"/>
<evidence type="ECO:0000269" key="3">
    <source>
    </source>
</evidence>
<evidence type="ECO:0000269" key="4">
    <source>
    </source>
</evidence>
<evidence type="ECO:0000269" key="5">
    <source>
    </source>
</evidence>
<evidence type="ECO:0000305" key="6"/>
<evidence type="ECO:0007829" key="7">
    <source>
        <dbReference type="PDB" id="4AKG"/>
    </source>
</evidence>
<evidence type="ECO:0007829" key="8">
    <source>
        <dbReference type="PDB" id="6KJN"/>
    </source>
</evidence>
<evidence type="ECO:0007829" key="9">
    <source>
        <dbReference type="PDB" id="6KJO"/>
    </source>
</evidence>
<evidence type="ECO:0007829" key="10">
    <source>
        <dbReference type="PDB" id="7MGM"/>
    </source>
</evidence>
<evidence type="ECO:0007829" key="11">
    <source>
        <dbReference type="PDB" id="7MI3"/>
    </source>
</evidence>
<feature type="chain" id="PRO_0000114643" description="Dynein heavy chain, cytoplasmic">
    <location>
        <begin position="1"/>
        <end position="4092"/>
    </location>
</feature>
<feature type="region of interest" description="Stem" evidence="1">
    <location>
        <begin position="1"/>
        <end position="1757"/>
    </location>
</feature>
<feature type="region of interest" description="AAA 1" evidence="1">
    <location>
        <begin position="1758"/>
        <end position="1979"/>
    </location>
</feature>
<feature type="region of interest" description="AAA 2" evidence="1">
    <location>
        <begin position="2036"/>
        <end position="2273"/>
    </location>
</feature>
<feature type="region of interest" description="AAA 3" evidence="1">
    <location>
        <begin position="2379"/>
        <end position="2628"/>
    </location>
</feature>
<feature type="region of interest" description="AAA 4" evidence="1">
    <location>
        <begin position="2722"/>
        <end position="2984"/>
    </location>
</feature>
<feature type="region of interest" description="Stalk" evidence="1">
    <location>
        <begin position="2993"/>
        <end position="3300"/>
    </location>
</feature>
<feature type="region of interest" description="AAA 5" evidence="1">
    <location>
        <begin position="3370"/>
        <end position="3599"/>
    </location>
</feature>
<feature type="region of interest" description="AAA 6" evidence="1">
    <location>
        <begin position="3760"/>
        <end position="3970"/>
    </location>
</feature>
<feature type="coiled-coil region" evidence="2">
    <location>
        <begin position="154"/>
        <end position="175"/>
    </location>
</feature>
<feature type="coiled-coil region" evidence="2">
    <location>
        <begin position="486"/>
        <end position="508"/>
    </location>
</feature>
<feature type="coiled-coil region" evidence="2">
    <location>
        <begin position="542"/>
        <end position="566"/>
    </location>
</feature>
<feature type="coiled-coil region" evidence="2">
    <location>
        <begin position="932"/>
        <end position="959"/>
    </location>
</feature>
<feature type="coiled-coil region" evidence="2">
    <location>
        <begin position="1042"/>
        <end position="1063"/>
    </location>
</feature>
<feature type="coiled-coil region" evidence="2">
    <location>
        <begin position="1681"/>
        <end position="1705"/>
    </location>
</feature>
<feature type="coiled-coil region" evidence="2">
    <location>
        <begin position="2993"/>
        <end position="3092"/>
    </location>
</feature>
<feature type="coiled-coil region" evidence="2">
    <location>
        <begin position="3242"/>
        <end position="3300"/>
    </location>
</feature>
<feature type="coiled-coil region" evidence="2">
    <location>
        <begin position="3532"/>
        <end position="3608"/>
    </location>
</feature>
<feature type="binding site" evidence="2">
    <location>
        <begin position="1796"/>
        <end position="1803"/>
    </location>
    <ligand>
        <name>ATP</name>
        <dbReference type="ChEBI" id="CHEBI:30616"/>
    </ligand>
</feature>
<feature type="binding site" evidence="2">
    <location>
        <begin position="2074"/>
        <end position="2081"/>
    </location>
    <ligand>
        <name>ATP</name>
        <dbReference type="ChEBI" id="CHEBI:30616"/>
    </ligand>
</feature>
<feature type="binding site" evidence="2">
    <location>
        <begin position="2418"/>
        <end position="2425"/>
    </location>
    <ligand>
        <name>ATP</name>
        <dbReference type="ChEBI" id="CHEBI:30616"/>
    </ligand>
</feature>
<feature type="binding site" evidence="2">
    <location>
        <begin position="2760"/>
        <end position="2767"/>
    </location>
    <ligand>
        <name>ATP</name>
        <dbReference type="ChEBI" id="CHEBI:30616"/>
    </ligand>
</feature>
<feature type="sequence conflict" description="In Ref. 4; AAA16055." evidence="6" ref="4">
    <original>Y</original>
    <variation>C</variation>
    <location>
        <position position="589"/>
    </location>
</feature>
<feature type="sequence conflict" description="In Ref. 4; AAA16055." evidence="6" ref="4">
    <original>V</original>
    <variation>A</variation>
    <location>
        <position position="601"/>
    </location>
</feature>
<feature type="sequence conflict" description="In Ref. 4; AAA16055." evidence="6" ref="4">
    <original>E</original>
    <variation>A</variation>
    <location>
        <position position="1364"/>
    </location>
</feature>
<feature type="sequence conflict" description="In Ref. 1; CAA79923." evidence="6" ref="1">
    <original>ML</original>
    <variation>IV</variation>
    <location>
        <begin position="2118"/>
        <end position="2119"/>
    </location>
</feature>
<feature type="helix" evidence="7">
    <location>
        <begin position="1366"/>
        <end position="1378"/>
    </location>
</feature>
<feature type="strand" evidence="7">
    <location>
        <begin position="1384"/>
        <end position="1387"/>
    </location>
</feature>
<feature type="strand" evidence="7">
    <location>
        <begin position="1389"/>
        <end position="1391"/>
    </location>
</feature>
<feature type="strand" evidence="7">
    <location>
        <begin position="1393"/>
        <end position="1396"/>
    </location>
</feature>
<feature type="helix" evidence="7">
    <location>
        <begin position="1399"/>
        <end position="1414"/>
    </location>
</feature>
<feature type="turn" evidence="7">
    <location>
        <begin position="1420"/>
        <end position="1424"/>
    </location>
</feature>
<feature type="helix" evidence="7">
    <location>
        <begin position="1425"/>
        <end position="1458"/>
    </location>
</feature>
<feature type="helix" evidence="7">
    <location>
        <begin position="1464"/>
        <end position="1468"/>
    </location>
</feature>
<feature type="helix" evidence="7">
    <location>
        <begin position="1470"/>
        <end position="1491"/>
    </location>
</feature>
<feature type="helix" evidence="7">
    <location>
        <begin position="1497"/>
        <end position="1501"/>
    </location>
</feature>
<feature type="helix" evidence="10">
    <location>
        <begin position="1511"/>
        <end position="1520"/>
    </location>
</feature>
<feature type="helix" evidence="10">
    <location>
        <begin position="1521"/>
        <end position="1523"/>
    </location>
</feature>
<feature type="helix" evidence="10">
    <location>
        <begin position="1524"/>
        <end position="1531"/>
    </location>
</feature>
<feature type="helix" evidence="10">
    <location>
        <begin position="1535"/>
        <end position="1539"/>
    </location>
</feature>
<feature type="helix" evidence="10">
    <location>
        <begin position="1542"/>
        <end position="1550"/>
    </location>
</feature>
<feature type="turn" evidence="10">
    <location>
        <begin position="1552"/>
        <end position="1554"/>
    </location>
</feature>
<feature type="helix" evidence="10">
    <location>
        <begin position="1558"/>
        <end position="1560"/>
    </location>
</feature>
<feature type="helix" evidence="10">
    <location>
        <begin position="1562"/>
        <end position="1565"/>
    </location>
</feature>
<feature type="strand" evidence="10">
    <location>
        <begin position="1567"/>
        <end position="1584"/>
    </location>
</feature>
<feature type="strand" evidence="10">
    <location>
        <begin position="1589"/>
        <end position="1597"/>
    </location>
</feature>
<feature type="helix" evidence="10">
    <location>
        <begin position="1604"/>
        <end position="1630"/>
    </location>
</feature>
<feature type="turn" evidence="10">
    <location>
        <begin position="1631"/>
        <end position="1633"/>
    </location>
</feature>
<feature type="helix" evidence="10">
    <location>
        <begin position="1636"/>
        <end position="1639"/>
    </location>
</feature>
<feature type="turn" evidence="10">
    <location>
        <begin position="1640"/>
        <end position="1642"/>
    </location>
</feature>
<feature type="helix" evidence="10">
    <location>
        <begin position="1645"/>
        <end position="1664"/>
    </location>
</feature>
<feature type="helix" evidence="10">
    <location>
        <begin position="1670"/>
        <end position="1688"/>
    </location>
</feature>
<feature type="helix" evidence="10">
    <location>
        <begin position="1692"/>
        <end position="1716"/>
    </location>
</feature>
<feature type="helix" evidence="10">
    <location>
        <begin position="1721"/>
        <end position="1729"/>
    </location>
</feature>
<feature type="strand" evidence="7">
    <location>
        <begin position="1733"/>
        <end position="1736"/>
    </location>
</feature>
<feature type="helix" evidence="10">
    <location>
        <begin position="1743"/>
        <end position="1745"/>
    </location>
</feature>
<feature type="strand" evidence="10">
    <location>
        <begin position="1748"/>
        <end position="1751"/>
    </location>
</feature>
<feature type="strand" evidence="10">
    <location>
        <begin position="1754"/>
        <end position="1757"/>
    </location>
</feature>
<feature type="helix" evidence="10">
    <location>
        <begin position="1773"/>
        <end position="1787"/>
    </location>
</feature>
<feature type="strand" evidence="10">
    <location>
        <begin position="1791"/>
        <end position="1795"/>
    </location>
</feature>
<feature type="strand" evidence="10">
    <location>
        <begin position="1797"/>
        <end position="1801"/>
    </location>
</feature>
<feature type="helix" evidence="10">
    <location>
        <begin position="1802"/>
        <end position="1812"/>
    </location>
</feature>
<feature type="strand" evidence="10">
    <location>
        <begin position="1817"/>
        <end position="1821"/>
    </location>
</feature>
<feature type="helix" evidence="10">
    <location>
        <begin position="1828"/>
        <end position="1841"/>
    </location>
</feature>
<feature type="strand" evidence="10">
    <location>
        <begin position="1844"/>
        <end position="1848"/>
    </location>
</feature>
<feature type="helix" evidence="10">
    <location>
        <begin position="1850"/>
        <end position="1852"/>
    </location>
</feature>
<feature type="helix" evidence="10">
    <location>
        <begin position="1855"/>
        <end position="1860"/>
    </location>
</feature>
<feature type="helix" evidence="10">
    <location>
        <begin position="1862"/>
        <end position="1874"/>
    </location>
</feature>
<feature type="strand" evidence="10">
    <location>
        <begin position="1877"/>
        <end position="1881"/>
    </location>
</feature>
<feature type="strand" evidence="10">
    <location>
        <begin position="1884"/>
        <end position="1887"/>
    </location>
</feature>
<feature type="strand" evidence="10">
    <location>
        <begin position="1893"/>
        <end position="1898"/>
    </location>
</feature>
<feature type="strand" evidence="7">
    <location>
        <begin position="1902"/>
        <end position="1905"/>
    </location>
</feature>
<feature type="helix" evidence="10">
    <location>
        <begin position="1910"/>
        <end position="1913"/>
    </location>
</feature>
<feature type="strand" evidence="10">
    <location>
        <begin position="1916"/>
        <end position="1920"/>
    </location>
</feature>
<feature type="helix" evidence="10">
    <location>
        <begin position="1926"/>
        <end position="1937"/>
    </location>
</feature>
<feature type="helix" evidence="10">
    <location>
        <begin position="1942"/>
        <end position="1959"/>
    </location>
</feature>
<feature type="helix" evidence="10">
    <location>
        <begin position="1970"/>
        <end position="1978"/>
    </location>
</feature>
<feature type="helix" evidence="10">
    <location>
        <begin position="1979"/>
        <end position="1983"/>
    </location>
</feature>
<feature type="helix" evidence="10">
    <location>
        <begin position="1984"/>
        <end position="1987"/>
    </location>
</feature>
<feature type="helix" evidence="10">
    <location>
        <begin position="1991"/>
        <end position="2001"/>
    </location>
</feature>
<feature type="helix" evidence="10">
    <location>
        <begin position="2003"/>
        <end position="2005"/>
    </location>
</feature>
<feature type="helix" evidence="10">
    <location>
        <begin position="2009"/>
        <end position="2021"/>
    </location>
</feature>
<feature type="helix" evidence="10">
    <location>
        <begin position="2032"/>
        <end position="2045"/>
    </location>
</feature>
<feature type="helix" evidence="10">
    <location>
        <begin position="2051"/>
        <end position="2063"/>
    </location>
</feature>
<feature type="turn" evidence="10">
    <location>
        <begin position="2064"/>
        <end position="2066"/>
    </location>
</feature>
<feature type="strand" evidence="10">
    <location>
        <begin position="2068"/>
        <end position="2075"/>
    </location>
</feature>
<feature type="helix" evidence="10">
    <location>
        <begin position="2080"/>
        <end position="2095"/>
    </location>
</feature>
<feature type="strand" evidence="10">
    <location>
        <begin position="2098"/>
        <end position="2104"/>
    </location>
</feature>
<feature type="helix" evidence="10">
    <location>
        <begin position="2106"/>
        <end position="2108"/>
    </location>
</feature>
<feature type="helix" evidence="10">
    <location>
        <begin position="2111"/>
        <end position="2114"/>
    </location>
</feature>
<feature type="strand" evidence="10">
    <location>
        <begin position="2116"/>
        <end position="2118"/>
    </location>
</feature>
<feature type="turn" evidence="10">
    <location>
        <begin position="2120"/>
        <end position="2122"/>
    </location>
</feature>
<feature type="strand" evidence="10">
    <location>
        <begin position="2125"/>
        <end position="2127"/>
    </location>
</feature>
<feature type="helix" evidence="10">
    <location>
        <begin position="2129"/>
        <end position="2139"/>
    </location>
</feature>
<feature type="helix" evidence="10">
    <location>
        <begin position="2144"/>
        <end position="2147"/>
    </location>
</feature>
<feature type="strand" evidence="10">
    <location>
        <begin position="2148"/>
        <end position="2156"/>
    </location>
</feature>
<feature type="helix" evidence="10">
    <location>
        <begin position="2160"/>
        <end position="2163"/>
    </location>
</feature>
<feature type="helix" evidence="10">
    <location>
        <begin position="2164"/>
        <end position="2166"/>
    </location>
</feature>
<feature type="helix" evidence="10">
    <location>
        <begin position="2167"/>
        <end position="2170"/>
    </location>
</feature>
<feature type="strand" evidence="10">
    <location>
        <begin position="2175"/>
        <end position="2177"/>
    </location>
</feature>
<feature type="strand" evidence="7">
    <location>
        <begin position="2179"/>
        <end position="2181"/>
    </location>
</feature>
<feature type="strand" evidence="10">
    <location>
        <begin position="2183"/>
        <end position="2185"/>
    </location>
</feature>
<feature type="strand" evidence="10">
    <location>
        <begin position="2190"/>
        <end position="2197"/>
    </location>
</feature>
<feature type="helix" evidence="10">
    <location>
        <begin position="2204"/>
        <end position="2207"/>
    </location>
</feature>
<feature type="strand" evidence="10">
    <location>
        <begin position="2210"/>
        <end position="2215"/>
    </location>
</feature>
<feature type="helix" evidence="10">
    <location>
        <begin position="2222"/>
        <end position="2234"/>
    </location>
</feature>
<feature type="helix" evidence="10">
    <location>
        <begin position="2245"/>
        <end position="2256"/>
    </location>
</feature>
<feature type="helix" evidence="10">
    <location>
        <begin position="2259"/>
        <end position="2268"/>
    </location>
</feature>
<feature type="helix" evidence="10">
    <location>
        <begin position="2269"/>
        <end position="2271"/>
    </location>
</feature>
<feature type="helix" evidence="10">
    <location>
        <begin position="2280"/>
        <end position="2282"/>
    </location>
</feature>
<feature type="helix" evidence="10">
    <location>
        <begin position="2284"/>
        <end position="2297"/>
    </location>
</feature>
<feature type="helix" evidence="10">
    <location>
        <begin position="2298"/>
        <end position="2302"/>
    </location>
</feature>
<feature type="strand" evidence="10">
    <location>
        <begin position="2303"/>
        <end position="2305"/>
    </location>
</feature>
<feature type="helix" evidence="10">
    <location>
        <begin position="2307"/>
        <end position="2326"/>
    </location>
</feature>
<feature type="helix" evidence="10">
    <location>
        <begin position="2332"/>
        <end position="2345"/>
    </location>
</feature>
<feature type="strand" evidence="10">
    <location>
        <begin position="2348"/>
        <end position="2350"/>
    </location>
</feature>
<feature type="strand" evidence="10">
    <location>
        <begin position="2357"/>
        <end position="2360"/>
    </location>
</feature>
<feature type="strand" evidence="7">
    <location>
        <begin position="2363"/>
        <end position="2365"/>
    </location>
</feature>
<feature type="strand" evidence="10">
    <location>
        <begin position="2367"/>
        <end position="2370"/>
    </location>
</feature>
<feature type="helix" evidence="10">
    <location>
        <begin position="2371"/>
        <end position="2374"/>
    </location>
</feature>
<feature type="helix" evidence="10">
    <location>
        <begin position="2382"/>
        <end position="2386"/>
    </location>
</feature>
<feature type="helix" evidence="10">
    <location>
        <begin position="2395"/>
        <end position="2409"/>
    </location>
</feature>
<feature type="strand" evidence="10">
    <location>
        <begin position="2413"/>
        <end position="2417"/>
    </location>
</feature>
<feature type="helix" evidence="10">
    <location>
        <begin position="2424"/>
        <end position="2433"/>
    </location>
</feature>
<feature type="strand" evidence="10">
    <location>
        <begin position="2436"/>
        <end position="2444"/>
    </location>
</feature>
<feature type="helix" evidence="10">
    <location>
        <begin position="2451"/>
        <end position="2457"/>
    </location>
</feature>
<feature type="turn" evidence="10">
    <location>
        <begin position="2458"/>
        <end position="2461"/>
    </location>
</feature>
<feature type="strand" evidence="10">
    <location>
        <begin position="2462"/>
        <end position="2465"/>
    </location>
</feature>
<feature type="turn" evidence="7">
    <location>
        <begin position="2468"/>
        <end position="2470"/>
    </location>
</feature>
<feature type="strand" evidence="10">
    <location>
        <begin position="2472"/>
        <end position="2479"/>
    </location>
</feature>
<feature type="strand" evidence="10">
    <location>
        <begin position="2481"/>
        <end position="2487"/>
    </location>
</feature>
<feature type="turn" evidence="7">
    <location>
        <begin position="2488"/>
        <end position="2490"/>
    </location>
</feature>
<feature type="strand" evidence="7">
    <location>
        <begin position="2496"/>
        <end position="2498"/>
    </location>
</feature>
<feature type="helix" evidence="10">
    <location>
        <begin position="2501"/>
        <end position="2512"/>
    </location>
</feature>
<feature type="strand" evidence="10">
    <location>
        <begin position="2513"/>
        <end position="2516"/>
    </location>
</feature>
<feature type="turn" evidence="10">
    <location>
        <begin position="2518"/>
        <end position="2520"/>
    </location>
</feature>
<feature type="strand" evidence="10">
    <location>
        <begin position="2523"/>
        <end position="2526"/>
    </location>
</feature>
<feature type="strand" evidence="10">
    <location>
        <begin position="2528"/>
        <end position="2535"/>
    </location>
</feature>
<feature type="helix" evidence="10">
    <location>
        <begin position="2548"/>
        <end position="2551"/>
    </location>
</feature>
<feature type="strand" evidence="10">
    <location>
        <begin position="2554"/>
        <end position="2558"/>
    </location>
</feature>
<feature type="helix" evidence="10">
    <location>
        <begin position="2564"/>
        <end position="2579"/>
    </location>
</feature>
<feature type="helix" evidence="10">
    <location>
        <begin position="2583"/>
        <end position="2588"/>
    </location>
</feature>
<feature type="helix" evidence="10">
    <location>
        <begin position="2589"/>
        <end position="2606"/>
    </location>
</feature>
<feature type="turn" evidence="10">
    <location>
        <begin position="2609"/>
        <end position="2611"/>
    </location>
</feature>
<feature type="helix" evidence="10">
    <location>
        <begin position="2619"/>
        <end position="2634"/>
    </location>
</feature>
<feature type="helix" evidence="10">
    <location>
        <begin position="2641"/>
        <end position="2656"/>
    </location>
</feature>
<feature type="helix" evidence="10">
    <location>
        <begin position="2657"/>
        <end position="2659"/>
    </location>
</feature>
<feature type="helix" evidence="10">
    <location>
        <begin position="2663"/>
        <end position="2680"/>
    </location>
</feature>
<feature type="turn" evidence="7">
    <location>
        <begin position="2691"/>
        <end position="2693"/>
    </location>
</feature>
<feature type="strand" evidence="10">
    <location>
        <begin position="2696"/>
        <end position="2703"/>
    </location>
</feature>
<feature type="helix" evidence="10">
    <location>
        <begin position="2709"/>
        <end position="2726"/>
    </location>
</feature>
<feature type="helix" evidence="10">
    <location>
        <begin position="2736"/>
        <end position="2749"/>
    </location>
</feature>
<feature type="strand" evidence="10">
    <location>
        <begin position="2751"/>
        <end position="2753"/>
    </location>
</feature>
<feature type="strand" evidence="10">
    <location>
        <begin position="2755"/>
        <end position="2760"/>
    </location>
</feature>
<feature type="turn" evidence="7">
    <location>
        <begin position="2761"/>
        <end position="2763"/>
    </location>
</feature>
<feature type="helix" evidence="10">
    <location>
        <begin position="2766"/>
        <end position="2776"/>
    </location>
</feature>
<feature type="strand" evidence="10">
    <location>
        <begin position="2780"/>
        <end position="2782"/>
    </location>
</feature>
<feature type="helix" evidence="10">
    <location>
        <begin position="2792"/>
        <end position="2808"/>
    </location>
</feature>
<feature type="strand" evidence="10">
    <location>
        <begin position="2813"/>
        <end position="2818"/>
    </location>
</feature>
<feature type="helix" evidence="10">
    <location>
        <begin position="2819"/>
        <end position="2821"/>
    </location>
</feature>
<feature type="helix" evidence="10">
    <location>
        <begin position="2825"/>
        <end position="2836"/>
    </location>
</feature>
<feature type="strand" evidence="10">
    <location>
        <begin position="2837"/>
        <end position="2839"/>
    </location>
</feature>
<feature type="turn" evidence="10">
    <location>
        <begin position="2841"/>
        <end position="2843"/>
    </location>
</feature>
<feature type="helix" evidence="10">
    <location>
        <begin position="2848"/>
        <end position="2862"/>
    </location>
</feature>
<feature type="helix" evidence="10">
    <location>
        <begin position="2870"/>
        <end position="2883"/>
    </location>
</feature>
<feature type="strand" evidence="10">
    <location>
        <begin position="2884"/>
        <end position="2892"/>
    </location>
</feature>
<feature type="helix" evidence="10">
    <location>
        <begin position="2897"/>
        <end position="2904"/>
    </location>
</feature>
<feature type="helix" evidence="10">
    <location>
        <begin position="2906"/>
        <end position="2911"/>
    </location>
</feature>
<feature type="strand" evidence="10">
    <location>
        <begin position="2912"/>
        <end position="2919"/>
    </location>
</feature>
<feature type="helix" evidence="10">
    <location>
        <begin position="2922"/>
        <end position="2932"/>
    </location>
</feature>
<feature type="strand" evidence="10">
    <location>
        <begin position="2939"/>
        <end position="2941"/>
    </location>
</feature>
<feature type="helix" evidence="11">
    <location>
        <begin position="2942"/>
        <end position="2944"/>
    </location>
</feature>
<feature type="helix" evidence="10">
    <location>
        <begin position="2950"/>
        <end position="2952"/>
    </location>
</feature>
<feature type="strand" evidence="10">
    <location>
        <begin position="2955"/>
        <end position="2957"/>
    </location>
</feature>
<feature type="helix" evidence="10">
    <location>
        <begin position="2961"/>
        <end position="2979"/>
    </location>
</feature>
<feature type="strand" evidence="7">
    <location>
        <begin position="2983"/>
        <end position="2985"/>
    </location>
</feature>
<feature type="helix" evidence="10">
    <location>
        <begin position="2990"/>
        <end position="3033"/>
    </location>
</feature>
<feature type="turn" evidence="9">
    <location>
        <begin position="3098"/>
        <end position="3100"/>
    </location>
</feature>
<feature type="helix" evidence="8">
    <location>
        <begin position="3104"/>
        <end position="3107"/>
    </location>
</feature>
<feature type="helix" evidence="8">
    <location>
        <begin position="3109"/>
        <end position="3114"/>
    </location>
</feature>
<feature type="helix" evidence="8">
    <location>
        <begin position="3117"/>
        <end position="3125"/>
    </location>
</feature>
<feature type="helix" evidence="8">
    <location>
        <begin position="3131"/>
        <end position="3144"/>
    </location>
</feature>
<feature type="helix" evidence="8">
    <location>
        <begin position="3151"/>
        <end position="3158"/>
    </location>
</feature>
<feature type="helix" evidence="8">
    <location>
        <begin position="3163"/>
        <end position="3169"/>
    </location>
</feature>
<feature type="helix" evidence="8">
    <location>
        <begin position="3180"/>
        <end position="3188"/>
    </location>
</feature>
<feature type="helix" evidence="8">
    <location>
        <begin position="3196"/>
        <end position="3202"/>
    </location>
</feature>
<feature type="helix" evidence="8">
    <location>
        <begin position="3206"/>
        <end position="3218"/>
    </location>
</feature>
<feature type="helix" evidence="8">
    <location>
        <begin position="3219"/>
        <end position="3221"/>
    </location>
</feature>
<feature type="turn" evidence="8">
    <location>
        <begin position="3222"/>
        <end position="3224"/>
    </location>
</feature>
<feature type="strand" evidence="9">
    <location>
        <begin position="3227"/>
        <end position="3230"/>
    </location>
</feature>
<feature type="helix" evidence="10">
    <location>
        <begin position="3290"/>
        <end position="3333"/>
    </location>
</feature>
<feature type="helix" evidence="10">
    <location>
        <begin position="3334"/>
        <end position="3336"/>
    </location>
</feature>
<feature type="helix" evidence="10">
    <location>
        <begin position="3339"/>
        <end position="3355"/>
    </location>
</feature>
<feature type="helix" evidence="10">
    <location>
        <begin position="3366"/>
        <end position="3370"/>
    </location>
</feature>
<feature type="helix" evidence="10">
    <location>
        <begin position="3373"/>
        <end position="3382"/>
    </location>
</feature>
<feature type="helix" evidence="10">
    <location>
        <begin position="3388"/>
        <end position="3398"/>
    </location>
</feature>
<feature type="strand" evidence="10">
    <location>
        <begin position="3401"/>
        <end position="3408"/>
    </location>
</feature>
<feature type="strand" evidence="11">
    <location>
        <begin position="3410"/>
        <end position="3412"/>
    </location>
</feature>
<feature type="helix" evidence="10">
    <location>
        <begin position="3413"/>
        <end position="3422"/>
    </location>
</feature>
<feature type="helix" evidence="10">
    <location>
        <begin position="3423"/>
        <end position="3425"/>
    </location>
</feature>
<feature type="strand" evidence="10">
    <location>
        <begin position="3426"/>
        <end position="3430"/>
    </location>
</feature>
<feature type="helix" evidence="10">
    <location>
        <begin position="3436"/>
        <end position="3446"/>
    </location>
</feature>
<feature type="strand" evidence="10">
    <location>
        <begin position="3449"/>
        <end position="3453"/>
    </location>
</feature>
<feature type="helix" evidence="10">
    <location>
        <begin position="3455"/>
        <end position="3457"/>
    </location>
</feature>
<feature type="helix" evidence="10">
    <location>
        <begin position="3460"/>
        <end position="3462"/>
    </location>
</feature>
<feature type="helix" evidence="10">
    <location>
        <begin position="3463"/>
        <end position="3467"/>
    </location>
</feature>
<feature type="strand" evidence="10">
    <location>
        <begin position="3471"/>
        <end position="3473"/>
    </location>
</feature>
<feature type="strand" evidence="10">
    <location>
        <begin position="3476"/>
        <end position="3481"/>
    </location>
</feature>
<feature type="strand" evidence="10">
    <location>
        <begin position="3484"/>
        <end position="3487"/>
    </location>
</feature>
<feature type="strand" evidence="10">
    <location>
        <begin position="3493"/>
        <end position="3498"/>
    </location>
</feature>
<feature type="helix" evidence="10">
    <location>
        <begin position="3507"/>
        <end position="3510"/>
    </location>
</feature>
<feature type="strand" evidence="10">
    <location>
        <begin position="3513"/>
        <end position="3517"/>
    </location>
</feature>
<feature type="helix" evidence="10">
    <location>
        <begin position="3522"/>
        <end position="3537"/>
    </location>
</feature>
<feature type="helix" evidence="10">
    <location>
        <begin position="3539"/>
        <end position="3571"/>
    </location>
</feature>
<feature type="strand" evidence="7">
    <location>
        <begin position="3573"/>
        <end position="3576"/>
    </location>
</feature>
<feature type="helix" evidence="10">
    <location>
        <begin position="3583"/>
        <end position="3604"/>
    </location>
</feature>
<feature type="helix" evidence="10">
    <location>
        <begin position="3608"/>
        <end position="3617"/>
    </location>
</feature>
<feature type="helix" evidence="10">
    <location>
        <begin position="3619"/>
        <end position="3638"/>
    </location>
</feature>
<feature type="helix" evidence="10">
    <location>
        <begin position="3640"/>
        <end position="3642"/>
    </location>
</feature>
<feature type="helix" evidence="10">
    <location>
        <begin position="3646"/>
        <end position="3658"/>
    </location>
</feature>
<feature type="helix" evidence="10">
    <location>
        <begin position="3670"/>
        <end position="3686"/>
    </location>
</feature>
<feature type="helix" evidence="10">
    <location>
        <begin position="3692"/>
        <end position="3710"/>
    </location>
</feature>
<feature type="helix" evidence="10">
    <location>
        <begin position="3713"/>
        <end position="3727"/>
    </location>
</feature>
<feature type="turn" evidence="7">
    <location>
        <begin position="3738"/>
        <end position="3740"/>
    </location>
</feature>
<feature type="helix" evidence="10">
    <location>
        <begin position="3742"/>
        <end position="3752"/>
    </location>
</feature>
<feature type="helix" evidence="10">
    <location>
        <begin position="3756"/>
        <end position="3766"/>
    </location>
</feature>
<feature type="helix" evidence="10">
    <location>
        <begin position="3774"/>
        <end position="3779"/>
    </location>
</feature>
<feature type="strand" evidence="10">
    <location>
        <begin position="3784"/>
        <end position="3790"/>
    </location>
</feature>
<feature type="helix" evidence="10">
    <location>
        <begin position="3797"/>
        <end position="3806"/>
    </location>
</feature>
<feature type="strand" evidence="10">
    <location>
        <begin position="3811"/>
        <end position="3815"/>
    </location>
</feature>
<feature type="helix" evidence="10">
    <location>
        <begin position="3819"/>
        <end position="3835"/>
    </location>
</feature>
<feature type="strand" evidence="10">
    <location>
        <begin position="3837"/>
        <end position="3842"/>
    </location>
</feature>
<feature type="helix" evidence="10">
    <location>
        <begin position="3844"/>
        <end position="3846"/>
    </location>
</feature>
<feature type="helix" evidence="10">
    <location>
        <begin position="3848"/>
        <end position="3860"/>
    </location>
</feature>
<feature type="turn" evidence="7">
    <location>
        <begin position="3865"/>
        <end position="3867"/>
    </location>
</feature>
<feature type="strand" evidence="10">
    <location>
        <begin position="3870"/>
        <end position="3878"/>
    </location>
</feature>
<feature type="strand" evidence="7">
    <location>
        <begin position="3879"/>
        <end position="3881"/>
    </location>
</feature>
<feature type="helix" evidence="10">
    <location>
        <begin position="3886"/>
        <end position="3890"/>
    </location>
</feature>
<feature type="strand" evidence="10">
    <location>
        <begin position="3892"/>
        <end position="3896"/>
    </location>
</feature>
<feature type="strand" evidence="10">
    <location>
        <begin position="3901"/>
        <end position="3903"/>
    </location>
</feature>
<feature type="helix" evidence="10">
    <location>
        <begin position="3904"/>
        <end position="3911"/>
    </location>
</feature>
<feature type="helix" evidence="7">
    <location>
        <begin position="3914"/>
        <end position="3917"/>
    </location>
</feature>
<feature type="helix" evidence="10">
    <location>
        <begin position="3923"/>
        <end position="3942"/>
    </location>
</feature>
<feature type="turn" evidence="10">
    <location>
        <begin position="3946"/>
        <end position="3949"/>
    </location>
</feature>
<feature type="strand" evidence="7">
    <location>
        <begin position="3950"/>
        <end position="3952"/>
    </location>
</feature>
<feature type="helix" evidence="10">
    <location>
        <begin position="3958"/>
        <end position="3974"/>
    </location>
</feature>
<feature type="helix" evidence="10">
    <location>
        <begin position="3982"/>
        <end position="3991"/>
    </location>
</feature>
<feature type="strand" evidence="10">
    <location>
        <begin position="3994"/>
        <end position="3997"/>
    </location>
</feature>
<feature type="helix" evidence="10">
    <location>
        <begin position="4001"/>
        <end position="4014"/>
    </location>
</feature>
<feature type="strand" evidence="10">
    <location>
        <begin position="4019"/>
        <end position="4021"/>
    </location>
</feature>
<feature type="strand" evidence="10">
    <location>
        <begin position="4023"/>
        <end position="4026"/>
    </location>
</feature>
<feature type="helix" evidence="10">
    <location>
        <begin position="4038"/>
        <end position="4051"/>
    </location>
</feature>
<feature type="helix" evidence="10">
    <location>
        <begin position="4058"/>
        <end position="4061"/>
    </location>
</feature>
<feature type="turn" evidence="10">
    <location>
        <begin position="4062"/>
        <end position="4064"/>
    </location>
</feature>
<feature type="helix" evidence="10">
    <location>
        <begin position="4067"/>
        <end position="4089"/>
    </location>
</feature>
<sequence>MCKNEARLANELIEFVAATVTGIKNSPKENEQAFIDYLHCQYLERFQFFLGLLDGREFDTLFVFLFEELDRTIVTIDIGEEAIYDANLANKKYSTLLIIKSRSVIVDAEPIATQISAIYLPGPVNAGNLASIITHGVSSVFGQLIKSDTKTYSVETIDKTRRKLDDISKQFQQLHTSIETPDLLAMVPSIIKLAVSKGATSHDYANYLPSNDLESMRFLNILQSIANKWFLVLKQTLAIDRDIKNGSFLDEVEFWSNFYEVLKSLIEQTQSQEFQVCLSVLTNAKRFHNLTNLLNEGSLSDKFKLADKYNQFLSSIPIDEVRQASNLEDLQELFPVLASSLKKFRYSGYPVQRFVVLMDKISQEVMDAILSNLSDLFQLEYGSFLGLYEKSAGMIEEWDDIVQDVNLLIREDLRKRAPQELLIQKLTFTSASVKATLDEILSTRKRFFSLAETIKSISPSTYHEEIQRLYHPFEQIHDISVNFRLKLEQAESEFSKNMLDLEKKLQNTLASFMDSDHCPTEKLSYLVKFKPLMELCPRIKVKVLENQQILLLEIKKDIRQLETGLELLPKILHVEALNNIPPISARISYFLNVQSRIDNIVQYLEALFGSNWNDTLEGRSISTSIVQLRKETNPHDVFLHWLGNFPEKATANLLTTPILKLIRNNEDDYELKVNFDFALAAAYSELRSLTYMAFQVPSHIVRIARTYMYLYPRAINLVELIQTFFSLSKSLSYTFYTNIFLKRNVQTVWLLLQQILITPWESLQEESSEMSCSVHSLARLEKSIDGILSDYQILKNSEPQFAKEFSGLKSFDGTADDLHEVEEIISNIQAIFENLFTKGLTNVSDHISTFNNLIISIILEKVRLNLKKMHFPKHVLKLSFNEGRITSSPSLAAMKRSLLKDIEALLNKVVLINFLHDPDHPLSTTLTFNSLVIKLKDDIQNCIEQVQNLHCKINSYVKEWQKMEFLWQITEEAFLEVVDNSTQRCFGILKGLLDSQSKFDLIISRNNFSKNLVLHTEDAQRHIRSKMDSWILYVSKHLLTIYERDARKLHEDMNRDREAVEDMDINFTSLKNITVIIEAVNVNKRHLTERDIQIKLLGSVMRALTKLKVRFPSHFVYIDQLDNDFSSLRQSLSYVEQELQKHRVVIAKSLEEGVENINNLSQSLNESWSVRKPISPTLTPPEALKILEFFNESITKLKKKMHSVAAAAKMLLIPVVLNDQLTHVVEEVKTYDLVWRSIKNLWEDVQRTFETPWCRVDVLLLQSDLANFLRRADELPRAVKQFEMYKSLFSQVNMLTSVNKILVELKDGALKPRHWNMIFRDIGKRQIQKNLLDKLEFSLKDVMVLNLTLNEILLTKIIERAQKEFVIEKSLNRIKKFWKEAQYEVIEHSSGLKLVREWDVLEQACKEDLEELVSMKASNYYKIFEQDCLDLESKLTKLSEIQVNWVEVQFYWLDLYGILGENLDIQNFLPLETSKFKSLTSEYKMITTRAFQLDTTIEVIHIPNFDTTLKLTIDSLKMIKSSLSTFLERQRRQFPRFYFLGNDDLLKIIGSGKHHDQVSKFMKKMFGSIESIIFLEDFITGVRSVEGEVLNLNEKIELKDSIQAQEWLNILDTEIKLSVFTQFRDCLGQLKDGTDIEVVVSKYIFQAILLSAQVMWTELVEKCLQTNQFSKYWKEVDMKIKGLLDKLNKSSDNVKKKIEALLVEYLHFNNVIGQLKNCSTKEEARLLWAKVQKFYQKNDTLDDLNSVFISQSGYLLQYKFEYIGIPERLIYTPLLLIGFATLTDSLHQKYGGCFFGPAGTGKTETVKAFGQNLGRVVVVFNCDDSFDYQVLSRLLVGITQIGAWGCFDEFNRLDEKVLSAVSANIQQIQNGLQVGKSHITLLEEETPLSPHTAVFITLNPGYNGRSELPENLKKSFREFSMKSPQSGTIAEMILQIMGFEDSKSLASKIVHFLELLSSKCSSMNHYHFGLRTLKGVLRNCSPLISEFGEGEKTVVESLKRVILPSLGDTDELVFKDELSKIFDSAGTPLNSKAIVQCLKDAGQRSGFSMSEEFLKKCMQFYYMQKTQQALILVGKAGCGKTATWKTVIDAMAIFDGHANVVYVIDTKVLTKESLYGSMLKATLEWRDGLFTSILRRVNDDITGTFKNSRIWVVFDSDLDPEYVEAMNSVLDDNKILTLPNGERLPIPPNFRILFETDNLDHTTPATITRCGLLWFSTDVCSISSKIDHLLNKSYEALDNKLSMFELDKLKDLISDSFDMASLTNIFTCSNDLVHILGVRTFNKLETAVQLAVHLISSYRQWFQNLDDKSLKDVITLLIKRSLLYALAGDSTGESQRAFIQTINTYFGHDSQELSDYSTIVIANDKLSFSSFCSEIPSVSLEAHEVMRPDIVIPTIDTIKHEKIFYDLLNSKRGIILCGPPGSGKTMIMNNALRNSSLYDVVGINFSKDTTTEHILSALHRHTNYVTTSKGLTLLPKSDIKNLVLFCDEINLPKLDKYGSQNVVLFLRQLMEKQGFWKTPENKWVTIERIHIVGACNPPTDPGRIPMSERFTRHAAILYLGYPSGKSLSQIYEIYYKAIFKLVPEFRSYTEPFARASVHLYNECKARYSTGLQSHYLFSPRELTRLVRGVYTAINTGPRQTLRSLIRLWAYEAWRIFADRLVGVKEKNSFEQLLYETVDKYLPNQDLGNISSTSLLFSGLLSLDFKEVNKTDLVNFIEERFKTFCDEELEVPMVIHESMVDHILRIDRALKQVQGHMMLIGASRTGKTILTRFVAWLNGLKIVQPKIHRHSNLSDFDMILKKAISDCSLKESRTCLIIDESNILETAFLERMNTLLANADIPDLFQGEEYDKLLNNLRNKTRSLGLLLDTEQELYDWFVGEIAKNLHVVFTICDPTNNKSSAMISSPALFNRCIINWMGDWDTKTMSQVANNMVDVIPMEFTDFIVPEVNKELVFTEPIQTIRDAVVNILIHFDRNFYQKMKVGVNPRSPGYFIDGLRALVKLVTAKYQDLQENQRFVNVGLEKLNESVLKVNELNKTLSKKSTELTEKEKEARSTLDKMLMEQNESERKQEATEEIKKILKVQEEDIRKRKEVVMKSIQDIEPTILEAQRGVKNIKKQQLTEIRSMVNPPSGVKIVMEAVCAILGYQFSNWRDIQQFIRKDDFIHNIVHYDTTLHMKPQIRKYMEEEFLSDPNFTYETINRASKACGPLYQWVNAQINFSKVLENVDPLRQEMKRIEFESLKTKANLLAAEEMTQDLEASIEVSKRKYSLLIRDVEAIKTEMSNVQANLDRSISLVKSLTFEKERWLNTTKQFSKTSQELIGNCIISSIYETYFGHLNERERADMLVILKRLLGKFAVKYDVNYRFIDYLVTLDEKMKWLECGLDKNDYFLENMSIVMNSQDAVPFLLDPSSHMITVISNYYGNKTVLLSFLEEGFVKRLENAIRFGSVVIIQDGEFFDPIISRLISREFNHAGNRVTVEIGDHEVDVSGDFKLFIHSCDPSGDIPIFLRSRVRLVHFVTNKESIETRIFDITLTEENAEMQRKREDLIKLNTEYKLKLKNLEKRLLEELNNSQGNMLENDELMVTLNNLKKEAMNIEKKLSESEEFFPQFDNLVEEYSIIGKHSVKIFSMLEKFGQFHWFYGISIGQFLSCFKRVFIKKSRETRAARTRVDEILWLLYQEVYCQFSTALDKKFKMIMAMTMFCLYKFDIESEQYKEAVLTMIGVLSESSDGVPKLTVDTNNDLRYLWDYVTTKSYISALNWFKNEFFVDEWNIADVVANSENNYFTMASERDVDGTFKLIELAKASKESLKIIPLGSIENLNYAQEEISKSKIEGGWILLQNIQMSLSWVKTYLHKHVEETKAAEEHEKFKMFMTCHLTGDKLPAPLLQRTDRFVYEDIPGILDTVKDLWGSQFFTGKISGVWSVYCTFLLSWFHALITARTRLVPHGFSKKYYFNDCDFQFASVYLENVLATNSTNNIPWAQVRDHIATIVYGGKIDEEKDLEVVAKLCAHVFCGSDNLQIVPGVRIPQPLLQQSEEEERARLTAILSNTIEPADSLSSWLQLPRESILNYERLQAKEVASSTEQLLQEM</sequence>
<name>DYHC_YEAST</name>
<protein>
    <recommendedName>
        <fullName>Dynein heavy chain, cytoplasmic</fullName>
    </recommendedName>
    <alternativeName>
        <fullName>Dynein heavy chain, cytosolic</fullName>
        <shortName>DYHC</shortName>
    </alternativeName>
</protein>
<gene>
    <name type="primary">DYN1</name>
    <name type="synonym">DHC1</name>
    <name type="ordered locus">YKR054C</name>
</gene>
<proteinExistence type="evidence at protein level"/>
<organism>
    <name type="scientific">Saccharomyces cerevisiae (strain ATCC 204508 / S288c)</name>
    <name type="common">Baker's yeast</name>
    <dbReference type="NCBI Taxonomy" id="559292"/>
    <lineage>
        <taxon>Eukaryota</taxon>
        <taxon>Fungi</taxon>
        <taxon>Dikarya</taxon>
        <taxon>Ascomycota</taxon>
        <taxon>Saccharomycotina</taxon>
        <taxon>Saccharomycetes</taxon>
        <taxon>Saccharomycetales</taxon>
        <taxon>Saccharomycetaceae</taxon>
        <taxon>Saccharomyces</taxon>
    </lineage>
</organism>
<dbReference type="EMBL" id="Z21877">
    <property type="protein sequence ID" value="CAA79923.1"/>
    <property type="molecule type" value="Genomic_DNA"/>
</dbReference>
<dbReference type="EMBL" id="L15626">
    <property type="protein sequence ID" value="AAA16055.1"/>
    <property type="molecule type" value="Unassigned_DNA"/>
</dbReference>
<dbReference type="EMBL" id="Z28279">
    <property type="protein sequence ID" value="CAA82132.1"/>
    <property type="molecule type" value="Genomic_DNA"/>
</dbReference>
<dbReference type="EMBL" id="BK006944">
    <property type="protein sequence ID" value="DAA09205.1"/>
    <property type="molecule type" value="Genomic_DNA"/>
</dbReference>
<dbReference type="PIR" id="S38128">
    <property type="entry name" value="S38128"/>
</dbReference>
<dbReference type="RefSeq" id="NP_012980.1">
    <property type="nucleotide sequence ID" value="NM_001179844.1"/>
</dbReference>
<dbReference type="PDB" id="3J67">
    <property type="method" value="EM"/>
    <property type="resolution" value="34.00 A"/>
    <property type="chains" value="A=1554-4092"/>
</dbReference>
<dbReference type="PDB" id="3J68">
    <property type="method" value="EM"/>
    <property type="resolution" value="30.00 A"/>
    <property type="chains" value="A=1554-4092"/>
</dbReference>
<dbReference type="PDB" id="3QMZ">
    <property type="method" value="X-ray"/>
    <property type="resolution" value="6.00 A"/>
    <property type="chains" value="A/B=1364-4092"/>
</dbReference>
<dbReference type="PDB" id="4AI6">
    <property type="method" value="X-ray"/>
    <property type="resolution" value="3.40 A"/>
    <property type="chains" value="A/B=1364-4092"/>
</dbReference>
<dbReference type="PDB" id="4AKG">
    <property type="method" value="X-ray"/>
    <property type="resolution" value="3.30 A"/>
    <property type="chains" value="A/B=1364-4092"/>
</dbReference>
<dbReference type="PDB" id="4AKH">
    <property type="method" value="X-ray"/>
    <property type="resolution" value="3.60 A"/>
    <property type="chains" value="A/B=1364-4092"/>
</dbReference>
<dbReference type="PDB" id="4AKI">
    <property type="method" value="X-ray"/>
    <property type="resolution" value="3.70 A"/>
    <property type="chains" value="A/B=1364-4092"/>
</dbReference>
<dbReference type="PDB" id="4W8F">
    <property type="method" value="X-ray"/>
    <property type="resolution" value="3.54 A"/>
    <property type="chains" value="A/B=1364-3038, A/B=3292-4092"/>
</dbReference>
<dbReference type="PDB" id="5AFR">
    <property type="method" value="X-ray"/>
    <property type="resolution" value="5.00 A"/>
    <property type="chains" value="A/B=1-557"/>
</dbReference>
<dbReference type="PDB" id="5VH9">
    <property type="method" value="EM"/>
    <property type="resolution" value="7.70 A"/>
    <property type="chains" value="A=1448-4092"/>
</dbReference>
<dbReference type="PDB" id="5VLJ">
    <property type="method" value="EM"/>
    <property type="resolution" value="10.50 A"/>
    <property type="chains" value="A=1448-4092"/>
</dbReference>
<dbReference type="PDB" id="6KIO">
    <property type="method" value="EM"/>
    <property type="resolution" value="3.94 A"/>
    <property type="chains" value="M=3095-3224"/>
</dbReference>
<dbReference type="PDB" id="6KIQ">
    <property type="method" value="EM"/>
    <property type="resolution" value="3.62 A"/>
    <property type="chains" value="M=3095-3224"/>
</dbReference>
<dbReference type="PDB" id="6KJN">
    <property type="method" value="NMR"/>
    <property type="chains" value="A=3095-3232"/>
</dbReference>
<dbReference type="PDB" id="6KJO">
    <property type="method" value="NMR"/>
    <property type="chains" value="A=3095-3232"/>
</dbReference>
<dbReference type="PDB" id="7MGM">
    <property type="method" value="EM"/>
    <property type="resolution" value="3.10 A"/>
    <property type="chains" value="A=1219-4092"/>
</dbReference>
<dbReference type="PDB" id="7MI1">
    <property type="method" value="X-ray"/>
    <property type="resolution" value="4.50 A"/>
    <property type="chains" value="A=1364-3038, A=3064-3076, A=3292-4092"/>
</dbReference>
<dbReference type="PDB" id="7MI3">
    <property type="method" value="EM"/>
    <property type="resolution" value="3.50 A"/>
    <property type="chains" value="A=1364-3038, A=3064-3076, A=3292-4092"/>
</dbReference>
<dbReference type="PDB" id="7MI6">
    <property type="method" value="EM"/>
    <property type="resolution" value="3.90 A"/>
    <property type="chains" value="A=1364-3038, A=3064-3076, A=3292-4092"/>
</dbReference>
<dbReference type="PDB" id="7MI8">
    <property type="method" value="EM"/>
    <property type="resolution" value="3.70 A"/>
    <property type="chains" value="A=1364-3038, A=3064-3076, A=3292-4092"/>
</dbReference>
<dbReference type="PDB" id="8DZZ">
    <property type="method" value="EM"/>
    <property type="resolution" value="4.10 A"/>
    <property type="chains" value="A/D=1218-4092"/>
</dbReference>
<dbReference type="PDB" id="8E00">
    <property type="method" value="EM"/>
    <property type="resolution" value="3.60 A"/>
    <property type="chains" value="A=1218-4092"/>
</dbReference>
<dbReference type="PDBsum" id="3J67"/>
<dbReference type="PDBsum" id="3J68"/>
<dbReference type="PDBsum" id="3QMZ"/>
<dbReference type="PDBsum" id="4AI6"/>
<dbReference type="PDBsum" id="4AKG"/>
<dbReference type="PDBsum" id="4AKH"/>
<dbReference type="PDBsum" id="4AKI"/>
<dbReference type="PDBsum" id="4W8F"/>
<dbReference type="PDBsum" id="5AFR"/>
<dbReference type="PDBsum" id="5VH9"/>
<dbReference type="PDBsum" id="5VLJ"/>
<dbReference type="PDBsum" id="6KIO"/>
<dbReference type="PDBsum" id="6KIQ"/>
<dbReference type="PDBsum" id="6KJN"/>
<dbReference type="PDBsum" id="6KJO"/>
<dbReference type="PDBsum" id="7MGM"/>
<dbReference type="PDBsum" id="7MI1"/>
<dbReference type="PDBsum" id="7MI3"/>
<dbReference type="PDBsum" id="7MI6"/>
<dbReference type="PDBsum" id="7MI8"/>
<dbReference type="PDBsum" id="8DZZ"/>
<dbReference type="PDBsum" id="8E00"/>
<dbReference type="BMRB" id="P36022"/>
<dbReference type="EMDB" id="EMD-23838"/>
<dbReference type="EMDB" id="EMD-23841"/>
<dbReference type="EMDB" id="EMD-23842"/>
<dbReference type="EMDB" id="EMD-6008"/>
<dbReference type="EMDB" id="EMD-6013"/>
<dbReference type="EMDB" id="EMD-6014"/>
<dbReference type="EMDB" id="EMD-6015"/>
<dbReference type="EMDB" id="EMD-6016"/>
<dbReference type="EMDB" id="EMD-6017"/>
<dbReference type="EMDB" id="EMD-6047"/>
<dbReference type="EMDB" id="EMD-6048"/>
<dbReference type="EMDB" id="EMD-6049"/>
<dbReference type="EMDB" id="EMD-6050"/>
<dbReference type="EMDB" id="EMD-6051"/>
<dbReference type="EMDB" id="EMD-6052"/>
<dbReference type="EMDB" id="EMD-6053"/>
<dbReference type="EMDB" id="EMD-6054"/>
<dbReference type="EMDB" id="EMD-6055"/>
<dbReference type="EMDB" id="EMD-6056"/>
<dbReference type="EMDB" id="EMD-6058"/>
<dbReference type="EMDB" id="EMD-6059"/>
<dbReference type="EMDB" id="EMD-6060"/>
<dbReference type="EMDB" id="EMD-6061"/>
<dbReference type="EMDB" id="EMD-6062"/>
<dbReference type="EMDB" id="EMD-6063"/>
<dbReference type="EMDB" id="EMD-6064"/>
<dbReference type="EMDB" id="EMD-6065"/>
<dbReference type="EMDB" id="EMD-6066"/>
<dbReference type="EMDB" id="EMD-6067"/>
<dbReference type="EMDB" id="EMD-6068"/>
<dbReference type="EMDB" id="EMD-6069"/>
<dbReference type="EMDB" id="EMD-6070"/>
<dbReference type="EMDB" id="EMD-6071"/>
<dbReference type="EMDB" id="EMD-6072"/>
<dbReference type="EMDB" id="EMD-6073"/>
<dbReference type="EMDB" id="EMD-6074"/>
<dbReference type="EMDB" id="EMD-8673"/>
<dbReference type="EMDB" id="EMD-8706"/>
<dbReference type="EMDB" id="EMD-9996"/>
<dbReference type="EMDB" id="EMD-9997"/>
<dbReference type="SMR" id="P36022"/>
<dbReference type="BioGRID" id="34185">
    <property type="interactions" value="358"/>
</dbReference>
<dbReference type="ComplexPortal" id="CPX-1178">
    <property type="entry name" value="Cytoplasmic dynein complex"/>
</dbReference>
<dbReference type="DIP" id="DIP-2644N"/>
<dbReference type="FunCoup" id="P36022">
    <property type="interactions" value="898"/>
</dbReference>
<dbReference type="IntAct" id="P36022">
    <property type="interactions" value="11"/>
</dbReference>
<dbReference type="MINT" id="P36022"/>
<dbReference type="STRING" id="4932.YKR054C"/>
<dbReference type="iPTMnet" id="P36022"/>
<dbReference type="PaxDb" id="4932-YKR054C"/>
<dbReference type="PeptideAtlas" id="P36022"/>
<dbReference type="EnsemblFungi" id="YKR054C_mRNA">
    <property type="protein sequence ID" value="YKR054C"/>
    <property type="gene ID" value="YKR054C"/>
</dbReference>
<dbReference type="GeneID" id="853928"/>
<dbReference type="KEGG" id="sce:YKR054C"/>
<dbReference type="AGR" id="SGD:S000001762"/>
<dbReference type="SGD" id="S000001762">
    <property type="gene designation" value="DYN1"/>
</dbReference>
<dbReference type="VEuPathDB" id="FungiDB:YKR054C"/>
<dbReference type="eggNOG" id="KOG3595">
    <property type="taxonomic scope" value="Eukaryota"/>
</dbReference>
<dbReference type="GeneTree" id="ENSGT00940000156103"/>
<dbReference type="HOGENOM" id="CLU_000038_7_0_1"/>
<dbReference type="InParanoid" id="P36022"/>
<dbReference type="OMA" id="NERQMTR"/>
<dbReference type="OrthoDB" id="447173at2759"/>
<dbReference type="BioCyc" id="YEAST:G3O-32023-MONOMER"/>
<dbReference type="BRENDA" id="5.6.1.2">
    <property type="organism ID" value="984"/>
</dbReference>
<dbReference type="Reactome" id="R-SCE-6798695">
    <property type="pathway name" value="Neutrophil degranulation"/>
</dbReference>
<dbReference type="BioGRID-ORCS" id="853928">
    <property type="hits" value="1 hit in 10 CRISPR screens"/>
</dbReference>
<dbReference type="CD-CODE" id="876000F7">
    <property type="entry name" value="Centrosome"/>
</dbReference>
<dbReference type="EvolutionaryTrace" id="P36022"/>
<dbReference type="PRO" id="PR:P36022"/>
<dbReference type="Proteomes" id="UP000002311">
    <property type="component" value="Chromosome XI"/>
</dbReference>
<dbReference type="RNAct" id="P36022">
    <property type="molecule type" value="protein"/>
</dbReference>
<dbReference type="GO" id="GO:0000235">
    <property type="term" value="C:astral microtubule"/>
    <property type="evidence" value="ECO:0000314"/>
    <property type="project" value="SGD"/>
</dbReference>
<dbReference type="GO" id="GO:0005938">
    <property type="term" value="C:cell cortex"/>
    <property type="evidence" value="ECO:0000314"/>
    <property type="project" value="SGD"/>
</dbReference>
<dbReference type="GO" id="GO:0005737">
    <property type="term" value="C:cytoplasm"/>
    <property type="evidence" value="ECO:0000303"/>
    <property type="project" value="ComplexPortal"/>
</dbReference>
<dbReference type="GO" id="GO:0005868">
    <property type="term" value="C:cytoplasmic dynein complex"/>
    <property type="evidence" value="ECO:0000353"/>
    <property type="project" value="SGD"/>
</dbReference>
<dbReference type="GO" id="GO:0005881">
    <property type="term" value="C:cytoplasmic microtubule"/>
    <property type="evidence" value="ECO:0000314"/>
    <property type="project" value="SGD"/>
</dbReference>
<dbReference type="GO" id="GO:0005816">
    <property type="term" value="C:spindle pole body"/>
    <property type="evidence" value="ECO:0000314"/>
    <property type="project" value="SGD"/>
</dbReference>
<dbReference type="GO" id="GO:0005524">
    <property type="term" value="F:ATP binding"/>
    <property type="evidence" value="ECO:0000314"/>
    <property type="project" value="SGD"/>
</dbReference>
<dbReference type="GO" id="GO:0016887">
    <property type="term" value="F:ATP hydrolysis activity"/>
    <property type="evidence" value="ECO:0007669"/>
    <property type="project" value="InterPro"/>
</dbReference>
<dbReference type="GO" id="GO:0045505">
    <property type="term" value="F:dynein intermediate chain binding"/>
    <property type="evidence" value="ECO:0000318"/>
    <property type="project" value="GO_Central"/>
</dbReference>
<dbReference type="GO" id="GO:0051959">
    <property type="term" value="F:dynein light intermediate chain binding"/>
    <property type="evidence" value="ECO:0000318"/>
    <property type="project" value="GO_Central"/>
</dbReference>
<dbReference type="GO" id="GO:0008569">
    <property type="term" value="F:minus-end-directed microtubule motor activity"/>
    <property type="evidence" value="ECO:0000314"/>
    <property type="project" value="SGD"/>
</dbReference>
<dbReference type="GO" id="GO:0031122">
    <property type="term" value="P:cytoplasmic microtubule organization"/>
    <property type="evidence" value="ECO:0000318"/>
    <property type="project" value="GO_Central"/>
</dbReference>
<dbReference type="GO" id="GO:0040001">
    <property type="term" value="P:establishment of mitotic spindle localization"/>
    <property type="evidence" value="ECO:0000315"/>
    <property type="project" value="SGD"/>
</dbReference>
<dbReference type="GO" id="GO:0000132">
    <property type="term" value="P:establishment of mitotic spindle orientation"/>
    <property type="evidence" value="ECO:0000315"/>
    <property type="project" value="SGD"/>
</dbReference>
<dbReference type="GO" id="GO:0000741">
    <property type="term" value="P:karyogamy"/>
    <property type="evidence" value="ECO:0007669"/>
    <property type="project" value="UniProtKB-KW"/>
</dbReference>
<dbReference type="GO" id="GO:0000070">
    <property type="term" value="P:mitotic sister chromatid segregation"/>
    <property type="evidence" value="ECO:0000316"/>
    <property type="project" value="SGD"/>
</dbReference>
<dbReference type="GO" id="GO:0007052">
    <property type="term" value="P:mitotic spindle organization"/>
    <property type="evidence" value="ECO:0000318"/>
    <property type="project" value="GO_Central"/>
</dbReference>
<dbReference type="GO" id="GO:0007097">
    <property type="term" value="P:nuclear migration"/>
    <property type="evidence" value="ECO:0000318"/>
    <property type="project" value="GO_Central"/>
</dbReference>
<dbReference type="GO" id="GO:0030473">
    <property type="term" value="P:nuclear migration along microtubule"/>
    <property type="evidence" value="ECO:0000315"/>
    <property type="project" value="SGD"/>
</dbReference>
<dbReference type="CDD" id="cd00009">
    <property type="entry name" value="AAA"/>
    <property type="match status" value="1"/>
</dbReference>
<dbReference type="FunFam" id="1.20.920.20:FF:000002">
    <property type="entry name" value="Cytoplasmic dynein 1 heavy chain"/>
    <property type="match status" value="1"/>
</dbReference>
<dbReference type="FunFam" id="3.40.50.300:FF:000996">
    <property type="entry name" value="Cytoplasmic dynein heavy chain"/>
    <property type="match status" value="1"/>
</dbReference>
<dbReference type="FunFam" id="1.20.140.100:FF:000018">
    <property type="entry name" value="Glutathione S-transferase class-mu 26 kDa isozyme"/>
    <property type="match status" value="1"/>
</dbReference>
<dbReference type="FunFam" id="3.40.50.300:FF:002357">
    <property type="entry name" value="Glutathione S-transferase class-mu 26 kDa isozyme"/>
    <property type="match status" value="1"/>
</dbReference>
<dbReference type="Gene3D" id="1.10.287.2620">
    <property type="match status" value="1"/>
</dbReference>
<dbReference type="Gene3D" id="1.10.472.130">
    <property type="match status" value="1"/>
</dbReference>
<dbReference type="Gene3D" id="1.10.8.710">
    <property type="match status" value="1"/>
</dbReference>
<dbReference type="Gene3D" id="1.10.8.740">
    <property type="match status" value="1"/>
</dbReference>
<dbReference type="Gene3D" id="1.20.1280.160">
    <property type="match status" value="1"/>
</dbReference>
<dbReference type="Gene3D" id="1.20.58.1120">
    <property type="match status" value="1"/>
</dbReference>
<dbReference type="Gene3D" id="1.20.920.20">
    <property type="match status" value="1"/>
</dbReference>
<dbReference type="Gene3D" id="1.20.920.30">
    <property type="match status" value="1"/>
</dbReference>
<dbReference type="Gene3D" id="1.20.140.100">
    <property type="entry name" value="Dynein heavy chain, N-terminal domain 2"/>
    <property type="match status" value="1"/>
</dbReference>
<dbReference type="Gene3D" id="3.20.180.20">
    <property type="entry name" value="Dynein heavy chain, N-terminal domain 2"/>
    <property type="match status" value="1"/>
</dbReference>
<dbReference type="Gene3D" id="3.40.50.300">
    <property type="entry name" value="P-loop containing nucleotide triphosphate hydrolases"/>
    <property type="match status" value="5"/>
</dbReference>
<dbReference type="Gene3D" id="1.10.8.720">
    <property type="entry name" value="Region D6 of dynein motor"/>
    <property type="match status" value="1"/>
</dbReference>
<dbReference type="InterPro" id="IPR003593">
    <property type="entry name" value="AAA+_ATPase"/>
</dbReference>
<dbReference type="InterPro" id="IPR035699">
    <property type="entry name" value="AAA_6"/>
</dbReference>
<dbReference type="InterPro" id="IPR035706">
    <property type="entry name" value="AAA_9"/>
</dbReference>
<dbReference type="InterPro" id="IPR041658">
    <property type="entry name" value="AAA_lid_11"/>
</dbReference>
<dbReference type="InterPro" id="IPR042219">
    <property type="entry name" value="AAA_lid_11_sf"/>
</dbReference>
<dbReference type="InterPro" id="IPR026983">
    <property type="entry name" value="DHC"/>
</dbReference>
<dbReference type="InterPro" id="IPR048404">
    <property type="entry name" value="DYN1_lid"/>
</dbReference>
<dbReference type="InterPro" id="IPR054354">
    <property type="entry name" value="DYNC2H1-like_lid"/>
</dbReference>
<dbReference type="InterPro" id="IPR042222">
    <property type="entry name" value="Dynein_2_N"/>
</dbReference>
<dbReference type="InterPro" id="IPR043157">
    <property type="entry name" value="Dynein_AAA1S"/>
</dbReference>
<dbReference type="InterPro" id="IPR024743">
    <property type="entry name" value="Dynein_HC_stalk"/>
</dbReference>
<dbReference type="InterPro" id="IPR024317">
    <property type="entry name" value="Dynein_heavy_chain_D4_dom"/>
</dbReference>
<dbReference type="InterPro" id="IPR004273">
    <property type="entry name" value="Dynein_heavy_D6_P-loop"/>
</dbReference>
<dbReference type="InterPro" id="IPR013602">
    <property type="entry name" value="Dynein_heavy_linker"/>
</dbReference>
<dbReference type="InterPro" id="IPR013594">
    <property type="entry name" value="Dynein_heavy_tail"/>
</dbReference>
<dbReference type="InterPro" id="IPR042228">
    <property type="entry name" value="Dynein_linker_3"/>
</dbReference>
<dbReference type="InterPro" id="IPR027417">
    <property type="entry name" value="P-loop_NTPase"/>
</dbReference>
<dbReference type="PANTHER" id="PTHR45703">
    <property type="entry name" value="DYNEIN HEAVY CHAIN"/>
    <property type="match status" value="1"/>
</dbReference>
<dbReference type="PANTHER" id="PTHR45703:SF36">
    <property type="entry name" value="DYNEIN HEAVY CHAIN, CYTOPLASMIC"/>
    <property type="match status" value="1"/>
</dbReference>
<dbReference type="Pfam" id="PF12774">
    <property type="entry name" value="AAA_6"/>
    <property type="match status" value="1"/>
</dbReference>
<dbReference type="Pfam" id="PF12775">
    <property type="entry name" value="AAA_7"/>
    <property type="match status" value="1"/>
</dbReference>
<dbReference type="Pfam" id="PF12780">
    <property type="entry name" value="AAA_8"/>
    <property type="match status" value="1"/>
</dbReference>
<dbReference type="Pfam" id="PF12781">
    <property type="entry name" value="AAA_9"/>
    <property type="match status" value="1"/>
</dbReference>
<dbReference type="Pfam" id="PF18198">
    <property type="entry name" value="AAA_lid_11"/>
    <property type="match status" value="1"/>
</dbReference>
<dbReference type="Pfam" id="PF08385">
    <property type="entry name" value="DHC_N1"/>
    <property type="match status" value="1"/>
</dbReference>
<dbReference type="Pfam" id="PF08393">
    <property type="entry name" value="DHC_N2"/>
    <property type="match status" value="1"/>
</dbReference>
<dbReference type="Pfam" id="PF21499">
    <property type="entry name" value="DYN1_lid"/>
    <property type="match status" value="1"/>
</dbReference>
<dbReference type="Pfam" id="PF22597">
    <property type="entry name" value="DYN_lid"/>
    <property type="match status" value="1"/>
</dbReference>
<dbReference type="Pfam" id="PF03028">
    <property type="entry name" value="Dynein_heavy"/>
    <property type="match status" value="1"/>
</dbReference>
<dbReference type="Pfam" id="PF12777">
    <property type="entry name" value="MT"/>
    <property type="match status" value="1"/>
</dbReference>
<dbReference type="SMART" id="SM00382">
    <property type="entry name" value="AAA"/>
    <property type="match status" value="3"/>
</dbReference>
<dbReference type="SUPFAM" id="SSF52540">
    <property type="entry name" value="P-loop containing nucleoside triphosphate hydrolases"/>
    <property type="match status" value="4"/>
</dbReference>
<keyword id="KW-0002">3D-structure</keyword>
<keyword id="KW-0067">ATP-binding</keyword>
<keyword id="KW-0175">Coiled coil</keyword>
<keyword id="KW-0963">Cytoplasm</keyword>
<keyword id="KW-0206">Cytoskeleton</keyword>
<keyword id="KW-0243">Dynein</keyword>
<keyword id="KW-0415">Karyogamy</keyword>
<keyword id="KW-0493">Microtubule</keyword>
<keyword id="KW-0505">Motor protein</keyword>
<keyword id="KW-0547">Nucleotide-binding</keyword>
<keyword id="KW-1185">Reference proteome</keyword>
<keyword id="KW-0677">Repeat</keyword>
<reference key="1">
    <citation type="journal article" date="1993" name="Proc. Natl. Acad. Sci. U.S.A.">
        <title>Cytoplasmic dynein is required for normal nuclear segregation in yeast.</title>
        <authorList>
            <person name="Eshel D."/>
            <person name="Urrestarazu L.A."/>
            <person name="Vissers S."/>
            <person name="Jauniaux J.-C."/>
            <person name="van Vliet-Reedijk J.C."/>
            <person name="Planta R.J."/>
            <person name="Gibbons I.R."/>
        </authorList>
    </citation>
    <scope>NUCLEOTIDE SEQUENCE [GENOMIC DNA]</scope>
</reference>
<reference key="2">
    <citation type="journal article" date="1994" name="Nature">
        <title>Complete DNA sequence of yeast chromosome XI.</title>
        <authorList>
            <person name="Dujon B."/>
            <person name="Alexandraki D."/>
            <person name="Andre B."/>
            <person name="Ansorge W."/>
            <person name="Baladron V."/>
            <person name="Ballesta J.P.G."/>
            <person name="Banrevi A."/>
            <person name="Bolle P.-A."/>
            <person name="Bolotin-Fukuhara M."/>
            <person name="Bossier P."/>
            <person name="Bou G."/>
            <person name="Boyer J."/>
            <person name="Buitrago M.J."/>
            <person name="Cheret G."/>
            <person name="Colleaux L."/>
            <person name="Daignan-Fornier B."/>
            <person name="del Rey F."/>
            <person name="Dion C."/>
            <person name="Domdey H."/>
            <person name="Duesterhoeft A."/>
            <person name="Duesterhus S."/>
            <person name="Entian K.-D."/>
            <person name="Erfle H."/>
            <person name="Esteban P.F."/>
            <person name="Feldmann H."/>
            <person name="Fernandes L."/>
            <person name="Fobo G.M."/>
            <person name="Fritz C."/>
            <person name="Fukuhara H."/>
            <person name="Gabel C."/>
            <person name="Gaillon L."/>
            <person name="Garcia-Cantalejo J.M."/>
            <person name="Garcia-Ramirez J.J."/>
            <person name="Gent M.E."/>
            <person name="Ghazvini M."/>
            <person name="Goffeau A."/>
            <person name="Gonzalez A."/>
            <person name="Grothues D."/>
            <person name="Guerreiro P."/>
            <person name="Hegemann J.H."/>
            <person name="Hewitt N."/>
            <person name="Hilger F."/>
            <person name="Hollenberg C.P."/>
            <person name="Horaitis O."/>
            <person name="Indge K.J."/>
            <person name="Jacquier A."/>
            <person name="James C.M."/>
            <person name="Jauniaux J.-C."/>
            <person name="Jimenez A."/>
            <person name="Keuchel H."/>
            <person name="Kirchrath L."/>
            <person name="Kleine K."/>
            <person name="Koetter P."/>
            <person name="Legrain P."/>
            <person name="Liebl S."/>
            <person name="Louis E.J."/>
            <person name="Maia e Silva A."/>
            <person name="Marck C."/>
            <person name="Monnier A.-L."/>
            <person name="Moestl D."/>
            <person name="Mueller S."/>
            <person name="Obermaier B."/>
            <person name="Oliver S.G."/>
            <person name="Pallier C."/>
            <person name="Pascolo S."/>
            <person name="Pfeiffer F."/>
            <person name="Philippsen P."/>
            <person name="Planta R.J."/>
            <person name="Pohl F.M."/>
            <person name="Pohl T.M."/>
            <person name="Poehlmann R."/>
            <person name="Portetelle D."/>
            <person name="Purnelle B."/>
            <person name="Puzos V."/>
            <person name="Ramezani Rad M."/>
            <person name="Rasmussen S.W."/>
            <person name="Remacha M.A."/>
            <person name="Revuelta J.L."/>
            <person name="Richard G.-F."/>
            <person name="Rieger M."/>
            <person name="Rodrigues-Pousada C."/>
            <person name="Rose M."/>
            <person name="Rupp T."/>
            <person name="Santos M.A."/>
            <person name="Schwager C."/>
            <person name="Sensen C."/>
            <person name="Skala J."/>
            <person name="Soares H."/>
            <person name="Sor F."/>
            <person name="Stegemann J."/>
            <person name="Tettelin H."/>
            <person name="Thierry A."/>
            <person name="Tzermia M."/>
            <person name="Urrestarazu L.A."/>
            <person name="van Dyck L."/>
            <person name="van Vliet-Reedijk J.C."/>
            <person name="Valens M."/>
            <person name="Vandenbol M."/>
            <person name="Vilela C."/>
            <person name="Vissers S."/>
            <person name="von Wettstein D."/>
            <person name="Voss H."/>
            <person name="Wiemann S."/>
            <person name="Xu G."/>
            <person name="Zimmermann J."/>
            <person name="Haasemann M."/>
            <person name="Becker I."/>
            <person name="Mewes H.-W."/>
        </authorList>
    </citation>
    <scope>NUCLEOTIDE SEQUENCE [LARGE SCALE GENOMIC DNA]</scope>
    <source>
        <strain>ATCC 204508 / S288c</strain>
    </source>
</reference>
<reference key="3">
    <citation type="journal article" date="2014" name="G3 (Bethesda)">
        <title>The reference genome sequence of Saccharomyces cerevisiae: Then and now.</title>
        <authorList>
            <person name="Engel S.R."/>
            <person name="Dietrich F.S."/>
            <person name="Fisk D.G."/>
            <person name="Binkley G."/>
            <person name="Balakrishnan R."/>
            <person name="Costanzo M.C."/>
            <person name="Dwight S.S."/>
            <person name="Hitz B.C."/>
            <person name="Karra K."/>
            <person name="Nash R.S."/>
            <person name="Weng S."/>
            <person name="Wong E.D."/>
            <person name="Lloyd P."/>
            <person name="Skrzypek M.S."/>
            <person name="Miyasato S.R."/>
            <person name="Simison M."/>
            <person name="Cherry J.M."/>
        </authorList>
    </citation>
    <scope>GENOME REANNOTATION</scope>
    <source>
        <strain>ATCC 204508 / S288c</strain>
    </source>
</reference>
<reference key="4">
    <citation type="journal article" date="1993" name="Proc. Natl. Acad. Sci. U.S.A.">
        <title>Disruption of mitotic spindle orientation in a yeast dynein mutant.</title>
        <authorList>
            <person name="Li Y.-Y."/>
            <person name="Yeh E.Y."/>
            <person name="Hays T."/>
            <person name="Bloom K.S."/>
        </authorList>
    </citation>
    <scope>NUCLEOTIDE SEQUENCE OF 1-3457</scope>
</reference>
<reference key="5">
    <citation type="journal article" date="2003" name="Nature">
        <title>Global analysis of protein localization in budding yeast.</title>
        <authorList>
            <person name="Huh W.-K."/>
            <person name="Falvo J.V."/>
            <person name="Gerke L.C."/>
            <person name="Carroll A.S."/>
            <person name="Howson R.W."/>
            <person name="Weissman J.S."/>
            <person name="O'Shea E.K."/>
        </authorList>
    </citation>
    <scope>SUBCELLULAR LOCATION [LARGE SCALE ANALYSIS]</scope>
</reference>
<reference key="6">
    <citation type="journal article" date="2003" name="Nature">
        <title>Global analysis of protein expression in yeast.</title>
        <authorList>
            <person name="Ghaemmaghami S."/>
            <person name="Huh W.-K."/>
            <person name="Bower K."/>
            <person name="Howson R.W."/>
            <person name="Belle A."/>
            <person name="Dephoure N."/>
            <person name="O'Shea E.K."/>
            <person name="Weissman J.S."/>
        </authorList>
    </citation>
    <scope>LEVEL OF PROTEIN EXPRESSION [LARGE SCALE ANALYSIS]</scope>
</reference>
<reference key="7">
    <citation type="journal article" date="2005" name="J. Cell Biol.">
        <title>The offloading model for dynein function: differential function of motor subunits.</title>
        <authorList>
            <person name="Lee W.-L."/>
            <person name="Kaiser M.A."/>
            <person name="Cooper J.A."/>
        </authorList>
    </citation>
    <scope>FUNCTION</scope>
    <scope>SUBCELLULAR LOCATION</scope>
    <scope>INTERACTION WITH DYN3</scope>
</reference>
<accession>P36022</accession>
<accession>D6VXB5</accession>